<comment type="catalytic activity">
    <reaction evidence="1">
        <text>L-cysteine + L-glutamate + ATP = gamma-L-glutamyl-L-cysteine + ADP + phosphate + H(+)</text>
        <dbReference type="Rhea" id="RHEA:13285"/>
        <dbReference type="ChEBI" id="CHEBI:15378"/>
        <dbReference type="ChEBI" id="CHEBI:29985"/>
        <dbReference type="ChEBI" id="CHEBI:30616"/>
        <dbReference type="ChEBI" id="CHEBI:35235"/>
        <dbReference type="ChEBI" id="CHEBI:43474"/>
        <dbReference type="ChEBI" id="CHEBI:58173"/>
        <dbReference type="ChEBI" id="CHEBI:456216"/>
        <dbReference type="EC" id="6.3.2.2"/>
    </reaction>
</comment>
<comment type="pathway">
    <text evidence="1">Sulfur metabolism; glutathione biosynthesis; glutathione from L-cysteine and L-glutamate: step 1/2.</text>
</comment>
<comment type="similarity">
    <text evidence="1">Belongs to the glutamate--cysteine ligase type 1 family. Type 1 subfamily.</text>
</comment>
<organism>
    <name type="scientific">Edwardsiella ictaluri (strain 93-146)</name>
    <dbReference type="NCBI Taxonomy" id="634503"/>
    <lineage>
        <taxon>Bacteria</taxon>
        <taxon>Pseudomonadati</taxon>
        <taxon>Pseudomonadota</taxon>
        <taxon>Gammaproteobacteria</taxon>
        <taxon>Enterobacterales</taxon>
        <taxon>Hafniaceae</taxon>
        <taxon>Edwardsiella</taxon>
    </lineage>
</organism>
<name>GSH1_EDWI9</name>
<gene>
    <name evidence="1" type="primary">gshA</name>
    <name type="ordered locus">NT01EI_3229</name>
</gene>
<reference key="1">
    <citation type="submission" date="2009-03" db="EMBL/GenBank/DDBJ databases">
        <title>Complete genome sequence of Edwardsiella ictaluri 93-146.</title>
        <authorList>
            <person name="Williams M.L."/>
            <person name="Gillaspy A.F."/>
            <person name="Dyer D.W."/>
            <person name="Thune R.L."/>
            <person name="Waldbieser G.C."/>
            <person name="Schuster S.C."/>
            <person name="Gipson J."/>
            <person name="Zaitshik J."/>
            <person name="Landry C."/>
            <person name="Lawrence M.L."/>
        </authorList>
    </citation>
    <scope>NUCLEOTIDE SEQUENCE [LARGE SCALE GENOMIC DNA]</scope>
    <source>
        <strain>93-146</strain>
    </source>
</reference>
<feature type="chain" id="PRO_1000212104" description="Glutamate--cysteine ligase">
    <location>
        <begin position="1"/>
        <end position="519"/>
    </location>
</feature>
<keyword id="KW-0067">ATP-binding</keyword>
<keyword id="KW-0317">Glutathione biosynthesis</keyword>
<keyword id="KW-0436">Ligase</keyword>
<keyword id="KW-0547">Nucleotide-binding</keyword>
<accession>C5BGG7</accession>
<evidence type="ECO:0000255" key="1">
    <source>
        <dbReference type="HAMAP-Rule" id="MF_00578"/>
    </source>
</evidence>
<dbReference type="EC" id="6.3.2.2" evidence="1"/>
<dbReference type="EMBL" id="CP001600">
    <property type="protein sequence ID" value="ACR70373.1"/>
    <property type="molecule type" value="Genomic_DNA"/>
</dbReference>
<dbReference type="RefSeq" id="WP_015872457.1">
    <property type="nucleotide sequence ID" value="NZ_CP169062.1"/>
</dbReference>
<dbReference type="SMR" id="C5BGG7"/>
<dbReference type="STRING" id="67780.B6E78_07780"/>
<dbReference type="GeneID" id="69540094"/>
<dbReference type="KEGG" id="eic:NT01EI_3229"/>
<dbReference type="PATRIC" id="fig|634503.3.peg.2879"/>
<dbReference type="HOGENOM" id="CLU_020728_3_0_6"/>
<dbReference type="OrthoDB" id="9803907at2"/>
<dbReference type="UniPathway" id="UPA00142">
    <property type="reaction ID" value="UER00209"/>
</dbReference>
<dbReference type="Proteomes" id="UP000001485">
    <property type="component" value="Chromosome"/>
</dbReference>
<dbReference type="GO" id="GO:0005829">
    <property type="term" value="C:cytosol"/>
    <property type="evidence" value="ECO:0007669"/>
    <property type="project" value="TreeGrafter"/>
</dbReference>
<dbReference type="GO" id="GO:0005524">
    <property type="term" value="F:ATP binding"/>
    <property type="evidence" value="ECO:0007669"/>
    <property type="project" value="UniProtKB-KW"/>
</dbReference>
<dbReference type="GO" id="GO:0004357">
    <property type="term" value="F:glutamate-cysteine ligase activity"/>
    <property type="evidence" value="ECO:0007669"/>
    <property type="project" value="UniProtKB-UniRule"/>
</dbReference>
<dbReference type="GO" id="GO:0046872">
    <property type="term" value="F:metal ion binding"/>
    <property type="evidence" value="ECO:0007669"/>
    <property type="project" value="TreeGrafter"/>
</dbReference>
<dbReference type="GO" id="GO:0006750">
    <property type="term" value="P:glutathione biosynthetic process"/>
    <property type="evidence" value="ECO:0007669"/>
    <property type="project" value="UniProtKB-UniRule"/>
</dbReference>
<dbReference type="FunFam" id="3.30.590.20:FF:000001">
    <property type="entry name" value="Glutamate--cysteine ligase"/>
    <property type="match status" value="1"/>
</dbReference>
<dbReference type="Gene3D" id="3.30.590.20">
    <property type="match status" value="1"/>
</dbReference>
<dbReference type="HAMAP" id="MF_00578">
    <property type="entry name" value="Glu_cys_ligase"/>
    <property type="match status" value="1"/>
</dbReference>
<dbReference type="InterPro" id="IPR014746">
    <property type="entry name" value="Gln_synth/guanido_kin_cat_dom"/>
</dbReference>
<dbReference type="InterPro" id="IPR007370">
    <property type="entry name" value="Glu_cys_ligase"/>
</dbReference>
<dbReference type="InterPro" id="IPR006334">
    <property type="entry name" value="Glut_cys_ligase"/>
</dbReference>
<dbReference type="NCBIfam" id="TIGR01434">
    <property type="entry name" value="glu_cys_ligase"/>
    <property type="match status" value="1"/>
</dbReference>
<dbReference type="PANTHER" id="PTHR38761">
    <property type="entry name" value="GLUTAMATE--CYSTEINE LIGASE"/>
    <property type="match status" value="1"/>
</dbReference>
<dbReference type="PANTHER" id="PTHR38761:SF1">
    <property type="entry name" value="GLUTAMATE--CYSTEINE LIGASE"/>
    <property type="match status" value="1"/>
</dbReference>
<dbReference type="Pfam" id="PF04262">
    <property type="entry name" value="Glu_cys_ligase"/>
    <property type="match status" value="1"/>
</dbReference>
<dbReference type="SUPFAM" id="SSF55931">
    <property type="entry name" value="Glutamine synthetase/guanido kinase"/>
    <property type="match status" value="1"/>
</dbReference>
<sequence length="519" mass="57761">MIPDVSQALSWLESHPNALDGIRRGIERETLRVTPEGHLATTPHPAVLGKALTHPWITTDFAESLLEFITPVDGSIDHMLTFLSDIHRYVARNLGDERMWPLSMPCFIGSEQDIILAQYGSSNLGRFKTLYREGLKNRYGALMQTISGVHYNFSLPLSFWQARAGVQDADSGKAAISDGYFRLIRNYYRFGWVIPYLFGASPAICSSFLNGRESALPFERRGGTLFLPYATSLRLSDLGYTNKSQSNLGITFNHLNQYVEGLKRAIHTPSAEFARLGVEESGHYHQLNANILQIENELYAPIRPKRVTRDGESPSDALLRGGVEYIEVRSLDINPFTPIGVDADQARFLDLFLIWCVLADAPEMSSDELLCTRQNWNRVILEGRKPGQTIGIGCHDARQPLAYVGQSLFADLHRVAEVLDGINGDARYQQVCARLVAAFEDVSLTYSARVVAQMGERGIGGYGLTLAQHYRDRLCSEPLALLDETTLAVQAQRSVTRQAALESQSCESFASYLRQHAGG</sequence>
<protein>
    <recommendedName>
        <fullName evidence="1">Glutamate--cysteine ligase</fullName>
        <ecNumber evidence="1">6.3.2.2</ecNumber>
    </recommendedName>
    <alternativeName>
        <fullName evidence="1">Gamma-ECS</fullName>
        <shortName evidence="1">GCS</shortName>
    </alternativeName>
    <alternativeName>
        <fullName evidence="1">Gamma-glutamylcysteine synthetase</fullName>
    </alternativeName>
</protein>
<proteinExistence type="inferred from homology"/>